<dbReference type="EC" id="3.6.5.-" evidence="1"/>
<dbReference type="EMBL" id="CP000431">
    <property type="protein sequence ID" value="ABG93135.1"/>
    <property type="molecule type" value="Genomic_DNA"/>
</dbReference>
<dbReference type="RefSeq" id="WP_009474019.1">
    <property type="nucleotide sequence ID" value="NC_008268.1"/>
</dbReference>
<dbReference type="SMR" id="Q0SH51"/>
<dbReference type="KEGG" id="rha:RHA1_ro01311"/>
<dbReference type="eggNOG" id="COG0536">
    <property type="taxonomic scope" value="Bacteria"/>
</dbReference>
<dbReference type="HOGENOM" id="CLU_011747_0_1_11"/>
<dbReference type="OrthoDB" id="9807318at2"/>
<dbReference type="Proteomes" id="UP000008710">
    <property type="component" value="Chromosome"/>
</dbReference>
<dbReference type="GO" id="GO:0005737">
    <property type="term" value="C:cytoplasm"/>
    <property type="evidence" value="ECO:0007669"/>
    <property type="project" value="UniProtKB-SubCell"/>
</dbReference>
<dbReference type="GO" id="GO:0005525">
    <property type="term" value="F:GTP binding"/>
    <property type="evidence" value="ECO:0007669"/>
    <property type="project" value="UniProtKB-UniRule"/>
</dbReference>
<dbReference type="GO" id="GO:0003924">
    <property type="term" value="F:GTPase activity"/>
    <property type="evidence" value="ECO:0007669"/>
    <property type="project" value="UniProtKB-UniRule"/>
</dbReference>
<dbReference type="GO" id="GO:0000287">
    <property type="term" value="F:magnesium ion binding"/>
    <property type="evidence" value="ECO:0007669"/>
    <property type="project" value="InterPro"/>
</dbReference>
<dbReference type="GO" id="GO:0042254">
    <property type="term" value="P:ribosome biogenesis"/>
    <property type="evidence" value="ECO:0007669"/>
    <property type="project" value="UniProtKB-UniRule"/>
</dbReference>
<dbReference type="CDD" id="cd01898">
    <property type="entry name" value="Obg"/>
    <property type="match status" value="1"/>
</dbReference>
<dbReference type="FunFam" id="2.70.210.12:FF:000001">
    <property type="entry name" value="GTPase Obg"/>
    <property type="match status" value="1"/>
</dbReference>
<dbReference type="Gene3D" id="3.30.300.350">
    <property type="entry name" value="GTP-binding protein OBG, C-terminal domain"/>
    <property type="match status" value="1"/>
</dbReference>
<dbReference type="Gene3D" id="2.70.210.12">
    <property type="entry name" value="GTP1/OBG domain"/>
    <property type="match status" value="1"/>
</dbReference>
<dbReference type="Gene3D" id="3.40.50.300">
    <property type="entry name" value="P-loop containing nucleotide triphosphate hydrolases"/>
    <property type="match status" value="1"/>
</dbReference>
<dbReference type="HAMAP" id="MF_01454">
    <property type="entry name" value="GTPase_Obg"/>
    <property type="match status" value="1"/>
</dbReference>
<dbReference type="InterPro" id="IPR031167">
    <property type="entry name" value="G_OBG"/>
</dbReference>
<dbReference type="InterPro" id="IPR006073">
    <property type="entry name" value="GTP-bd"/>
</dbReference>
<dbReference type="InterPro" id="IPR014100">
    <property type="entry name" value="GTP-bd_Obg/CgtA"/>
</dbReference>
<dbReference type="InterPro" id="IPR036346">
    <property type="entry name" value="GTP-bd_prot_GTP1/OBG_C_sf"/>
</dbReference>
<dbReference type="InterPro" id="IPR006074">
    <property type="entry name" value="GTP1-OBG_CS"/>
</dbReference>
<dbReference type="InterPro" id="IPR006169">
    <property type="entry name" value="GTP1_OBG_dom"/>
</dbReference>
<dbReference type="InterPro" id="IPR036726">
    <property type="entry name" value="GTP1_OBG_dom_sf"/>
</dbReference>
<dbReference type="InterPro" id="IPR045086">
    <property type="entry name" value="OBG_GTPase"/>
</dbReference>
<dbReference type="InterPro" id="IPR015349">
    <property type="entry name" value="OCT_dom"/>
</dbReference>
<dbReference type="InterPro" id="IPR027417">
    <property type="entry name" value="P-loop_NTPase"/>
</dbReference>
<dbReference type="NCBIfam" id="TIGR02729">
    <property type="entry name" value="Obg_CgtA"/>
    <property type="match status" value="1"/>
</dbReference>
<dbReference type="NCBIfam" id="TIGR03595">
    <property type="entry name" value="Obg_CgtA_exten"/>
    <property type="match status" value="1"/>
</dbReference>
<dbReference type="NCBIfam" id="NF008954">
    <property type="entry name" value="PRK12296.1"/>
    <property type="match status" value="1"/>
</dbReference>
<dbReference type="NCBIfam" id="NF008955">
    <property type="entry name" value="PRK12297.1"/>
    <property type="match status" value="1"/>
</dbReference>
<dbReference type="NCBIfam" id="NF008956">
    <property type="entry name" value="PRK12299.1"/>
    <property type="match status" value="1"/>
</dbReference>
<dbReference type="PANTHER" id="PTHR11702">
    <property type="entry name" value="DEVELOPMENTALLY REGULATED GTP-BINDING PROTEIN-RELATED"/>
    <property type="match status" value="1"/>
</dbReference>
<dbReference type="PANTHER" id="PTHR11702:SF31">
    <property type="entry name" value="MITOCHONDRIAL RIBOSOME-ASSOCIATED GTPASE 2"/>
    <property type="match status" value="1"/>
</dbReference>
<dbReference type="Pfam" id="PF09269">
    <property type="entry name" value="DUF1967"/>
    <property type="match status" value="1"/>
</dbReference>
<dbReference type="Pfam" id="PF01018">
    <property type="entry name" value="GTP1_OBG"/>
    <property type="match status" value="1"/>
</dbReference>
<dbReference type="Pfam" id="PF01926">
    <property type="entry name" value="MMR_HSR1"/>
    <property type="match status" value="1"/>
</dbReference>
<dbReference type="PRINTS" id="PR00326">
    <property type="entry name" value="GTP1OBG"/>
</dbReference>
<dbReference type="SUPFAM" id="SSF102741">
    <property type="entry name" value="Obg GTP-binding protein C-terminal domain"/>
    <property type="match status" value="1"/>
</dbReference>
<dbReference type="SUPFAM" id="SSF82051">
    <property type="entry name" value="Obg GTP-binding protein N-terminal domain"/>
    <property type="match status" value="1"/>
</dbReference>
<dbReference type="SUPFAM" id="SSF52540">
    <property type="entry name" value="P-loop containing nucleoside triphosphate hydrolases"/>
    <property type="match status" value="1"/>
</dbReference>
<dbReference type="PROSITE" id="PS51710">
    <property type="entry name" value="G_OBG"/>
    <property type="match status" value="1"/>
</dbReference>
<dbReference type="PROSITE" id="PS00905">
    <property type="entry name" value="GTP1_OBG"/>
    <property type="match status" value="1"/>
</dbReference>
<dbReference type="PROSITE" id="PS51883">
    <property type="entry name" value="OBG"/>
    <property type="match status" value="1"/>
</dbReference>
<dbReference type="PROSITE" id="PS51881">
    <property type="entry name" value="OCT"/>
    <property type="match status" value="1"/>
</dbReference>
<reference key="1">
    <citation type="journal article" date="2006" name="Proc. Natl. Acad. Sci. U.S.A.">
        <title>The complete genome of Rhodococcus sp. RHA1 provides insights into a catabolic powerhouse.</title>
        <authorList>
            <person name="McLeod M.P."/>
            <person name="Warren R.L."/>
            <person name="Hsiao W.W.L."/>
            <person name="Araki N."/>
            <person name="Myhre M."/>
            <person name="Fernandes C."/>
            <person name="Miyazawa D."/>
            <person name="Wong W."/>
            <person name="Lillquist A.L."/>
            <person name="Wang D."/>
            <person name="Dosanjh M."/>
            <person name="Hara H."/>
            <person name="Petrescu A."/>
            <person name="Morin R.D."/>
            <person name="Yang G."/>
            <person name="Stott J.M."/>
            <person name="Schein J.E."/>
            <person name="Shin H."/>
            <person name="Smailus D."/>
            <person name="Siddiqui A.S."/>
            <person name="Marra M.A."/>
            <person name="Jones S.J.M."/>
            <person name="Holt R."/>
            <person name="Brinkman F.S.L."/>
            <person name="Miyauchi K."/>
            <person name="Fukuda M."/>
            <person name="Davies J.E."/>
            <person name="Mohn W.W."/>
            <person name="Eltis L.D."/>
        </authorList>
    </citation>
    <scope>NUCLEOTIDE SEQUENCE [LARGE SCALE GENOMIC DNA]</scope>
    <source>
        <strain>RHA1</strain>
    </source>
</reference>
<protein>
    <recommendedName>
        <fullName evidence="1">GTPase Obg</fullName>
        <ecNumber evidence="1">3.6.5.-</ecNumber>
    </recommendedName>
    <alternativeName>
        <fullName evidence="1">GTP-binding protein Obg</fullName>
    </alternativeName>
</protein>
<name>OBG_RHOJR</name>
<organism>
    <name type="scientific">Rhodococcus jostii (strain RHA1)</name>
    <dbReference type="NCBI Taxonomy" id="101510"/>
    <lineage>
        <taxon>Bacteria</taxon>
        <taxon>Bacillati</taxon>
        <taxon>Actinomycetota</taxon>
        <taxon>Actinomycetes</taxon>
        <taxon>Mycobacteriales</taxon>
        <taxon>Nocardiaceae</taxon>
        <taxon>Rhodococcus</taxon>
    </lineage>
</organism>
<evidence type="ECO:0000255" key="1">
    <source>
        <dbReference type="HAMAP-Rule" id="MF_01454"/>
    </source>
</evidence>
<evidence type="ECO:0000255" key="2">
    <source>
        <dbReference type="PROSITE-ProRule" id="PRU01229"/>
    </source>
</evidence>
<evidence type="ECO:0000255" key="3">
    <source>
        <dbReference type="PROSITE-ProRule" id="PRU01231"/>
    </source>
</evidence>
<evidence type="ECO:0000256" key="4">
    <source>
        <dbReference type="SAM" id="MobiDB-lite"/>
    </source>
</evidence>
<feature type="chain" id="PRO_0000386187" description="GTPase Obg">
    <location>
        <begin position="1"/>
        <end position="486"/>
    </location>
</feature>
<feature type="domain" description="Obg" evidence="3">
    <location>
        <begin position="2"/>
        <end position="159"/>
    </location>
</feature>
<feature type="domain" description="OBG-type G" evidence="1">
    <location>
        <begin position="160"/>
        <end position="340"/>
    </location>
</feature>
<feature type="domain" description="OCT" evidence="2">
    <location>
        <begin position="358"/>
        <end position="438"/>
    </location>
</feature>
<feature type="region of interest" description="Disordered" evidence="4">
    <location>
        <begin position="462"/>
        <end position="486"/>
    </location>
</feature>
<feature type="binding site" evidence="1">
    <location>
        <begin position="166"/>
        <end position="173"/>
    </location>
    <ligand>
        <name>GTP</name>
        <dbReference type="ChEBI" id="CHEBI:37565"/>
    </ligand>
</feature>
<feature type="binding site" evidence="1">
    <location>
        <position position="173"/>
    </location>
    <ligand>
        <name>Mg(2+)</name>
        <dbReference type="ChEBI" id="CHEBI:18420"/>
    </ligand>
</feature>
<feature type="binding site" evidence="1">
    <location>
        <begin position="191"/>
        <end position="195"/>
    </location>
    <ligand>
        <name>GTP</name>
        <dbReference type="ChEBI" id="CHEBI:37565"/>
    </ligand>
</feature>
<feature type="binding site" evidence="1">
    <location>
        <position position="193"/>
    </location>
    <ligand>
        <name>Mg(2+)</name>
        <dbReference type="ChEBI" id="CHEBI:18420"/>
    </ligand>
</feature>
<feature type="binding site" evidence="1">
    <location>
        <begin position="212"/>
        <end position="215"/>
    </location>
    <ligand>
        <name>GTP</name>
        <dbReference type="ChEBI" id="CHEBI:37565"/>
    </ligand>
</feature>
<feature type="binding site" evidence="1">
    <location>
        <begin position="292"/>
        <end position="295"/>
    </location>
    <ligand>
        <name>GTP</name>
        <dbReference type="ChEBI" id="CHEBI:37565"/>
    </ligand>
</feature>
<feature type="binding site" evidence="1">
    <location>
        <begin position="321"/>
        <end position="323"/>
    </location>
    <ligand>
        <name>GTP</name>
        <dbReference type="ChEBI" id="CHEBI:37565"/>
    </ligand>
</feature>
<proteinExistence type="inferred from homology"/>
<comment type="function">
    <text evidence="1">An essential GTPase which binds GTP, GDP and possibly (p)ppGpp with moderate affinity, with high nucleotide exchange rates and a fairly low GTP hydrolysis rate. Plays a role in control of the cell cycle, stress response, ribosome biogenesis and in those bacteria that undergo differentiation, in morphogenesis control.</text>
</comment>
<comment type="cofactor">
    <cofactor evidence="1">
        <name>Mg(2+)</name>
        <dbReference type="ChEBI" id="CHEBI:18420"/>
    </cofactor>
</comment>
<comment type="subunit">
    <text evidence="1">Monomer.</text>
</comment>
<comment type="subcellular location">
    <subcellularLocation>
        <location evidence="1">Cytoplasm</location>
    </subcellularLocation>
</comment>
<comment type="similarity">
    <text evidence="1">Belongs to the TRAFAC class OBG-HflX-like GTPase superfamily. OBG GTPase family.</text>
</comment>
<keyword id="KW-0963">Cytoplasm</keyword>
<keyword id="KW-0342">GTP-binding</keyword>
<keyword id="KW-0378">Hydrolase</keyword>
<keyword id="KW-0460">Magnesium</keyword>
<keyword id="KW-0479">Metal-binding</keyword>
<keyword id="KW-0547">Nucleotide-binding</keyword>
<gene>
    <name evidence="1" type="primary">obg</name>
    <name type="ordered locus">RHA1_ro01311</name>
</gene>
<sequence>MSRFIDRVVLHVSAGKGGNGCASVHREKFKPLGGPDGGNGGRGGDVVLEVDGNVHTLLDFHFHPHAKATNGKQGMGSNRDGAQGDDLILRVPDGTVVLDEDGRILADLIGVGTRFEAAQGGRGGLGNAALSSKARKAPGFALLGEDGVERELVLELKSVADVGLVGFPSAGKSSLVSVLSAAKPKIADYPFTTLVPNLGVVSSGDTTFTVADVPGLIPGASDGRGLGLDFLRHLERCAVLAHVVDCATLDPGRDPISDIDALEAELAAYKGALSGDAGLGDLADRPRIVILNKADVPEAAELAEMVTPDLEARGWPVFTISAVSREGLRPLTFALAKLVADYREAHPKAEPKRQVIRPVISNENSFSVVADPEIPGGFIVRGTRPERWVRQTQFDNDEAVGYLADRLARLGVETELVKQGAEPGASVTIGNVSFDWEPQTPAGVDLTRTGRGTDPRLDQVERIGATERKHASRIRRGLEGLDPEDQ</sequence>
<accession>Q0SH51</accession>